<name>GCSH_SALTY</name>
<keyword id="KW-0450">Lipoyl</keyword>
<keyword id="KW-1185">Reference proteome</keyword>
<protein>
    <recommendedName>
        <fullName evidence="2">Glycine cleavage system H protein</fullName>
    </recommendedName>
</protein>
<organism>
    <name type="scientific">Salmonella typhimurium (strain LT2 / SGSC1412 / ATCC 700720)</name>
    <dbReference type="NCBI Taxonomy" id="99287"/>
    <lineage>
        <taxon>Bacteria</taxon>
        <taxon>Pseudomonadati</taxon>
        <taxon>Pseudomonadota</taxon>
        <taxon>Gammaproteobacteria</taxon>
        <taxon>Enterobacterales</taxon>
        <taxon>Enterobacteriaceae</taxon>
        <taxon>Salmonella</taxon>
    </lineage>
</organism>
<accession>Q8ZM75</accession>
<comment type="function">
    <text evidence="2">The glycine cleavage system catalyzes the degradation of glycine. The H protein shuttles the methylamine group of glycine from the P protein to the T protein.</text>
</comment>
<comment type="cofactor">
    <cofactor evidence="2">
        <name>(R)-lipoate</name>
        <dbReference type="ChEBI" id="CHEBI:83088"/>
    </cofactor>
    <text evidence="2">Binds 1 lipoyl cofactor covalently.</text>
</comment>
<comment type="subunit">
    <text evidence="2">The glycine cleavage system is composed of four proteins: P, T, L and H.</text>
</comment>
<comment type="similarity">
    <text evidence="2">Belongs to the GcvH family.</text>
</comment>
<dbReference type="EMBL" id="AE006468">
    <property type="protein sequence ID" value="AAL21929.1"/>
    <property type="molecule type" value="Genomic_DNA"/>
</dbReference>
<dbReference type="RefSeq" id="NP_461970.1">
    <property type="nucleotide sequence ID" value="NC_003197.2"/>
</dbReference>
<dbReference type="RefSeq" id="WP_000073211.1">
    <property type="nucleotide sequence ID" value="NC_003197.2"/>
</dbReference>
<dbReference type="SMR" id="Q8ZM75"/>
<dbReference type="STRING" id="99287.STM3054"/>
<dbReference type="PaxDb" id="99287-STM3054"/>
<dbReference type="GeneID" id="1254577"/>
<dbReference type="KEGG" id="stm:STM3054"/>
<dbReference type="PATRIC" id="fig|99287.12.peg.3235"/>
<dbReference type="HOGENOM" id="CLU_097408_2_1_6"/>
<dbReference type="OMA" id="KEHEWIR"/>
<dbReference type="PhylomeDB" id="Q8ZM75"/>
<dbReference type="BioCyc" id="SENT99287:STM3054-MONOMER"/>
<dbReference type="Proteomes" id="UP000001014">
    <property type="component" value="Chromosome"/>
</dbReference>
<dbReference type="GO" id="GO:0005829">
    <property type="term" value="C:cytosol"/>
    <property type="evidence" value="ECO:0000318"/>
    <property type="project" value="GO_Central"/>
</dbReference>
<dbReference type="GO" id="GO:0005960">
    <property type="term" value="C:glycine cleavage complex"/>
    <property type="evidence" value="ECO:0007669"/>
    <property type="project" value="InterPro"/>
</dbReference>
<dbReference type="GO" id="GO:0019464">
    <property type="term" value="P:glycine decarboxylation via glycine cleavage system"/>
    <property type="evidence" value="ECO:0007669"/>
    <property type="project" value="UniProtKB-UniRule"/>
</dbReference>
<dbReference type="CDD" id="cd06848">
    <property type="entry name" value="GCS_H"/>
    <property type="match status" value="1"/>
</dbReference>
<dbReference type="FunFam" id="2.40.50.100:FF:000011">
    <property type="entry name" value="Glycine cleavage system H protein"/>
    <property type="match status" value="1"/>
</dbReference>
<dbReference type="Gene3D" id="2.40.50.100">
    <property type="match status" value="1"/>
</dbReference>
<dbReference type="HAMAP" id="MF_00272">
    <property type="entry name" value="GcvH"/>
    <property type="match status" value="1"/>
</dbReference>
<dbReference type="InterPro" id="IPR003016">
    <property type="entry name" value="2-oxoA_DH_lipoyl-BS"/>
</dbReference>
<dbReference type="InterPro" id="IPR000089">
    <property type="entry name" value="Biotin_lipoyl"/>
</dbReference>
<dbReference type="InterPro" id="IPR002930">
    <property type="entry name" value="GCV_H"/>
</dbReference>
<dbReference type="InterPro" id="IPR033753">
    <property type="entry name" value="GCV_H/Fam206"/>
</dbReference>
<dbReference type="InterPro" id="IPR017453">
    <property type="entry name" value="GCV_H_sub"/>
</dbReference>
<dbReference type="InterPro" id="IPR011053">
    <property type="entry name" value="Single_hybrid_motif"/>
</dbReference>
<dbReference type="NCBIfam" id="TIGR00527">
    <property type="entry name" value="gcvH"/>
    <property type="match status" value="1"/>
</dbReference>
<dbReference type="NCBIfam" id="NF002270">
    <property type="entry name" value="PRK01202.1"/>
    <property type="match status" value="1"/>
</dbReference>
<dbReference type="PANTHER" id="PTHR11715">
    <property type="entry name" value="GLYCINE CLEAVAGE SYSTEM H PROTEIN"/>
    <property type="match status" value="1"/>
</dbReference>
<dbReference type="PANTHER" id="PTHR11715:SF3">
    <property type="entry name" value="GLYCINE CLEAVAGE SYSTEM H PROTEIN-RELATED"/>
    <property type="match status" value="1"/>
</dbReference>
<dbReference type="Pfam" id="PF01597">
    <property type="entry name" value="GCV_H"/>
    <property type="match status" value="1"/>
</dbReference>
<dbReference type="SUPFAM" id="SSF51230">
    <property type="entry name" value="Single hybrid motif"/>
    <property type="match status" value="1"/>
</dbReference>
<dbReference type="PROSITE" id="PS50968">
    <property type="entry name" value="BIOTINYL_LIPOYL"/>
    <property type="match status" value="1"/>
</dbReference>
<dbReference type="PROSITE" id="PS00189">
    <property type="entry name" value="LIPOYL"/>
    <property type="match status" value="1"/>
</dbReference>
<reference key="1">
    <citation type="journal article" date="2001" name="Nature">
        <title>Complete genome sequence of Salmonella enterica serovar Typhimurium LT2.</title>
        <authorList>
            <person name="McClelland M."/>
            <person name="Sanderson K.E."/>
            <person name="Spieth J."/>
            <person name="Clifton S.W."/>
            <person name="Latreille P."/>
            <person name="Courtney L."/>
            <person name="Porwollik S."/>
            <person name="Ali J."/>
            <person name="Dante M."/>
            <person name="Du F."/>
            <person name="Hou S."/>
            <person name="Layman D."/>
            <person name="Leonard S."/>
            <person name="Nguyen C."/>
            <person name="Scott K."/>
            <person name="Holmes A."/>
            <person name="Grewal N."/>
            <person name="Mulvaney E."/>
            <person name="Ryan E."/>
            <person name="Sun H."/>
            <person name="Florea L."/>
            <person name="Miller W."/>
            <person name="Stoneking T."/>
            <person name="Nhan M."/>
            <person name="Waterston R."/>
            <person name="Wilson R.K."/>
        </authorList>
    </citation>
    <scope>NUCLEOTIDE SEQUENCE [LARGE SCALE GENOMIC DNA]</scope>
    <source>
        <strain>LT2 / SGSC1412 / ATCC 700720</strain>
    </source>
</reference>
<proteinExistence type="inferred from homology"/>
<evidence type="ECO:0000250" key="1"/>
<evidence type="ECO:0000255" key="2">
    <source>
        <dbReference type="HAMAP-Rule" id="MF_00272"/>
    </source>
</evidence>
<evidence type="ECO:0000255" key="3">
    <source>
        <dbReference type="PROSITE-ProRule" id="PRU01066"/>
    </source>
</evidence>
<feature type="initiator methionine" description="Removed" evidence="1">
    <location>
        <position position="1"/>
    </location>
</feature>
<feature type="chain" id="PRO_0000166243" description="Glycine cleavage system H protein">
    <location>
        <begin position="2"/>
        <end position="129"/>
    </location>
</feature>
<feature type="domain" description="Lipoyl-binding" evidence="3">
    <location>
        <begin position="24"/>
        <end position="106"/>
    </location>
</feature>
<feature type="modified residue" description="N6-lipoyllysine" evidence="2">
    <location>
        <position position="65"/>
    </location>
</feature>
<gene>
    <name evidence="2" type="primary">gcvH</name>
    <name type="ordered locus">STM3054</name>
</gene>
<sequence>MSNVPAELKYSKEHEWLRKEADGTYTVGITEHAQELLGDMVFVDLPEVGATVSAGDDCAVAESVKAASDIYAPVSGEIVAVNDALSDSPELVNSEPYTGGWIFKIKASDESELESLLDATAYEALLEDE</sequence>